<comment type="function">
    <text evidence="1">Cell division protein that is required for growth during stress conditions. May be involved in protecting or stabilizing the divisomal assembly under conditions of stress.</text>
</comment>
<comment type="subcellular location">
    <subcellularLocation>
        <location evidence="1">Periplasm</location>
    </subcellularLocation>
    <text evidence="1">Localizes to the division septum.</text>
</comment>
<comment type="PTM">
    <text>Predicted to be exported by the Tat system. The position of the signal peptide cleavage has not been experimentally proven.</text>
</comment>
<comment type="similarity">
    <text evidence="1">Belongs to the FtsP family.</text>
</comment>
<accession>Q32BS6</accession>
<evidence type="ECO:0000255" key="1">
    <source>
        <dbReference type="HAMAP-Rule" id="MF_00915"/>
    </source>
</evidence>
<dbReference type="EMBL" id="CP000034">
    <property type="protein sequence ID" value="ABB63229.1"/>
    <property type="molecule type" value="Genomic_DNA"/>
</dbReference>
<dbReference type="RefSeq" id="WP_000059377.1">
    <property type="nucleotide sequence ID" value="NC_007606.1"/>
</dbReference>
<dbReference type="RefSeq" id="YP_404720.1">
    <property type="nucleotide sequence ID" value="NC_007606.1"/>
</dbReference>
<dbReference type="SMR" id="Q32BS6"/>
<dbReference type="STRING" id="300267.SDY_3220"/>
<dbReference type="EnsemblBacteria" id="ABB63229">
    <property type="protein sequence ID" value="ABB63229"/>
    <property type="gene ID" value="SDY_3220"/>
</dbReference>
<dbReference type="KEGG" id="sdy:SDY_3220"/>
<dbReference type="PATRIC" id="fig|300267.13.peg.3845"/>
<dbReference type="HOGENOM" id="CLU_009100_2_4_6"/>
<dbReference type="Proteomes" id="UP000002716">
    <property type="component" value="Chromosome"/>
</dbReference>
<dbReference type="GO" id="GO:0032153">
    <property type="term" value="C:cell division site"/>
    <property type="evidence" value="ECO:0007669"/>
    <property type="project" value="UniProtKB-UniRule"/>
</dbReference>
<dbReference type="GO" id="GO:0030288">
    <property type="term" value="C:outer membrane-bounded periplasmic space"/>
    <property type="evidence" value="ECO:0007669"/>
    <property type="project" value="UniProtKB-UniRule"/>
</dbReference>
<dbReference type="GO" id="GO:0005507">
    <property type="term" value="F:copper ion binding"/>
    <property type="evidence" value="ECO:0007669"/>
    <property type="project" value="InterPro"/>
</dbReference>
<dbReference type="GO" id="GO:0016491">
    <property type="term" value="F:oxidoreductase activity"/>
    <property type="evidence" value="ECO:0007669"/>
    <property type="project" value="InterPro"/>
</dbReference>
<dbReference type="GO" id="GO:0043093">
    <property type="term" value="P:FtsZ-dependent cytokinesis"/>
    <property type="evidence" value="ECO:0007669"/>
    <property type="project" value="UniProtKB-UniRule"/>
</dbReference>
<dbReference type="CDD" id="cd04232">
    <property type="entry name" value="CuRO_1_CueO_FtsP"/>
    <property type="match status" value="1"/>
</dbReference>
<dbReference type="CDD" id="cd13867">
    <property type="entry name" value="CuRO_2_CueO_FtsP"/>
    <property type="match status" value="1"/>
</dbReference>
<dbReference type="CDD" id="cd13890">
    <property type="entry name" value="CuRO_3_CueO_FtsP"/>
    <property type="match status" value="1"/>
</dbReference>
<dbReference type="FunFam" id="2.60.40.420:FF:000004">
    <property type="entry name" value="Cell division protein FtsP"/>
    <property type="match status" value="1"/>
</dbReference>
<dbReference type="FunFam" id="2.60.40.420:FF:000006">
    <property type="entry name" value="Cell division protein FtsP"/>
    <property type="match status" value="1"/>
</dbReference>
<dbReference type="FunFam" id="2.60.40.420:FF:000007">
    <property type="entry name" value="Cell division protein FtsP"/>
    <property type="match status" value="1"/>
</dbReference>
<dbReference type="Gene3D" id="2.60.40.420">
    <property type="entry name" value="Cupredoxins - blue copper proteins"/>
    <property type="match status" value="3"/>
</dbReference>
<dbReference type="HAMAP" id="MF_00915">
    <property type="entry name" value="FtsP"/>
    <property type="match status" value="1"/>
</dbReference>
<dbReference type="InterPro" id="IPR011707">
    <property type="entry name" value="Cu-oxidase-like_N"/>
</dbReference>
<dbReference type="InterPro" id="IPR011706">
    <property type="entry name" value="Cu-oxidase_C"/>
</dbReference>
<dbReference type="InterPro" id="IPR045087">
    <property type="entry name" value="Cu-oxidase_fam"/>
</dbReference>
<dbReference type="InterPro" id="IPR008972">
    <property type="entry name" value="Cupredoxin"/>
</dbReference>
<dbReference type="InterPro" id="IPR026589">
    <property type="entry name" value="FtsP"/>
</dbReference>
<dbReference type="InterPro" id="IPR006311">
    <property type="entry name" value="TAT_signal"/>
</dbReference>
<dbReference type="InterPro" id="IPR019546">
    <property type="entry name" value="TAT_signal_bac_arc"/>
</dbReference>
<dbReference type="NCBIfam" id="NF008135">
    <property type="entry name" value="PRK10883.1"/>
    <property type="match status" value="1"/>
</dbReference>
<dbReference type="NCBIfam" id="TIGR01409">
    <property type="entry name" value="TAT_signal_seq"/>
    <property type="match status" value="1"/>
</dbReference>
<dbReference type="PANTHER" id="PTHR48267:SF1">
    <property type="entry name" value="BILIRUBIN OXIDASE"/>
    <property type="match status" value="1"/>
</dbReference>
<dbReference type="PANTHER" id="PTHR48267">
    <property type="entry name" value="CUPREDOXIN SUPERFAMILY PROTEIN"/>
    <property type="match status" value="1"/>
</dbReference>
<dbReference type="Pfam" id="PF07731">
    <property type="entry name" value="Cu-oxidase_2"/>
    <property type="match status" value="1"/>
</dbReference>
<dbReference type="Pfam" id="PF07732">
    <property type="entry name" value="Cu-oxidase_3"/>
    <property type="match status" value="1"/>
</dbReference>
<dbReference type="SUPFAM" id="SSF49503">
    <property type="entry name" value="Cupredoxins"/>
    <property type="match status" value="3"/>
</dbReference>
<dbReference type="PROSITE" id="PS51318">
    <property type="entry name" value="TAT"/>
    <property type="match status" value="1"/>
</dbReference>
<sequence>MSLSRRQFIQASGIALCAGAVPLKASAAGQQQPLPVPPLLESRRGQPLFMTVQRAHWSFTLGTRASVWGINGSYLGPTIRVWKGDDVKLIYSNRLTENVSMTVAGLQVPGPLMGGPARMMSPNADWAPVLPIRQNAATLWYHANTPNRTAQQVYNGLAGMWLVEDEVSKSLPIPNHYGVDDFPVIIQDKRLDNFGTPEYNEPGSGGFVGDTLLVNGVQSPYVEVSRGWVRLRLLNASNSRRYQLQMSDGRPLHVISGDQGFLPAPVSVKQLSLAPGERREILVDMSNGDEVSITCGEAASIVDRIRGFFEPSSILVSTLVLTLRPTGLLPLVTDSLPMRLLPTEIMAGSPIRSRDISLGDDPGINGQLWDVNRIDVTAQQGTWERWTVRADEPQAFHIEGVMFQIRNVNGAMPFPEDRGWKDTVWVDGQVELLVYFGQPSWAHFPFYFNSQTLEMADRGSIGQLLVNPVP</sequence>
<organism>
    <name type="scientific">Shigella dysenteriae serotype 1 (strain Sd197)</name>
    <dbReference type="NCBI Taxonomy" id="300267"/>
    <lineage>
        <taxon>Bacteria</taxon>
        <taxon>Pseudomonadati</taxon>
        <taxon>Pseudomonadota</taxon>
        <taxon>Gammaproteobacteria</taxon>
        <taxon>Enterobacterales</taxon>
        <taxon>Enterobacteriaceae</taxon>
        <taxon>Shigella</taxon>
    </lineage>
</organism>
<proteinExistence type="inferred from homology"/>
<protein>
    <recommendedName>
        <fullName evidence="1">Cell division protein FtsP</fullName>
    </recommendedName>
</protein>
<feature type="signal peptide" description="Tat-type signal" evidence="1">
    <location>
        <begin position="1"/>
        <end position="27"/>
    </location>
</feature>
<feature type="chain" id="PRO_0000416014" description="Cell division protein FtsP">
    <location>
        <begin position="28"/>
        <end position="470"/>
    </location>
</feature>
<feature type="domain" description="Plastocyanin-like" evidence="1">
    <location>
        <begin position="229"/>
        <end position="287"/>
    </location>
</feature>
<name>FTSP_SHIDS</name>
<keyword id="KW-0131">Cell cycle</keyword>
<keyword id="KW-0132">Cell division</keyword>
<keyword id="KW-0574">Periplasm</keyword>
<keyword id="KW-1185">Reference proteome</keyword>
<keyword id="KW-0732">Signal</keyword>
<gene>
    <name evidence="1" type="primary">ftsP</name>
    <name type="ordered locus">SDY_3220</name>
</gene>
<reference key="1">
    <citation type="journal article" date="2005" name="Nucleic Acids Res.">
        <title>Genome dynamics and diversity of Shigella species, the etiologic agents of bacillary dysentery.</title>
        <authorList>
            <person name="Yang F."/>
            <person name="Yang J."/>
            <person name="Zhang X."/>
            <person name="Chen L."/>
            <person name="Jiang Y."/>
            <person name="Yan Y."/>
            <person name="Tang X."/>
            <person name="Wang J."/>
            <person name="Xiong Z."/>
            <person name="Dong J."/>
            <person name="Xue Y."/>
            <person name="Zhu Y."/>
            <person name="Xu X."/>
            <person name="Sun L."/>
            <person name="Chen S."/>
            <person name="Nie H."/>
            <person name="Peng J."/>
            <person name="Xu J."/>
            <person name="Wang Y."/>
            <person name="Yuan Z."/>
            <person name="Wen Y."/>
            <person name="Yao Z."/>
            <person name="Shen Y."/>
            <person name="Qiang B."/>
            <person name="Hou Y."/>
            <person name="Yu J."/>
            <person name="Jin Q."/>
        </authorList>
    </citation>
    <scope>NUCLEOTIDE SEQUENCE [LARGE SCALE GENOMIC DNA]</scope>
    <source>
        <strain>Sd197</strain>
    </source>
</reference>